<sequence length="198" mass="21130">MRLVLASQSPSRLSILRGAGVEPVIAPAHVDERAIEERLAGAEPAEIVCALAAAKAEAIAPDYPEDVVVGGDSMLLLDGSLQGKPHTPEATVERWHAQAGRAAELITGHCVLYGEERFVEASRTTVHFAQASDADIEAYARTGEPLECAGAFTLEALGGWFIDRIEGDPSSVIGLSLPVLRRALYSFGLNVSEFWAQH</sequence>
<feature type="chain" id="PRO_1000146287" description="Nucleoside triphosphate pyrophosphatase">
    <location>
        <begin position="1"/>
        <end position="198"/>
    </location>
</feature>
<feature type="active site" description="Proton acceptor" evidence="1">
    <location>
        <position position="72"/>
    </location>
</feature>
<organism>
    <name type="scientific">Corynebacterium aurimucosum (strain ATCC 700975 / DSM 44827 / CIP 107346 / CN-1)</name>
    <name type="common">Corynebacterium nigricans</name>
    <dbReference type="NCBI Taxonomy" id="548476"/>
    <lineage>
        <taxon>Bacteria</taxon>
        <taxon>Bacillati</taxon>
        <taxon>Actinomycetota</taxon>
        <taxon>Actinomycetes</taxon>
        <taxon>Mycobacteriales</taxon>
        <taxon>Corynebacteriaceae</taxon>
        <taxon>Corynebacterium</taxon>
    </lineage>
</organism>
<gene>
    <name type="ordered locus">cauri_0560</name>
</gene>
<keyword id="KW-0963">Cytoplasm</keyword>
<keyword id="KW-0378">Hydrolase</keyword>
<keyword id="KW-0546">Nucleotide metabolism</keyword>
<keyword id="KW-1185">Reference proteome</keyword>
<reference key="1">
    <citation type="journal article" date="2010" name="BMC Genomics">
        <title>Complete genome sequence and lifestyle of black-pigmented Corynebacterium aurimucosum ATCC 700975 (formerly C. nigricans CN-1) isolated from a vaginal swab of a woman with spontaneous abortion.</title>
        <authorList>
            <person name="Trost E."/>
            <person name="Gotker S."/>
            <person name="Schneider J."/>
            <person name="Schneiker-Bekel S."/>
            <person name="Szczepanowski R."/>
            <person name="Tilker A."/>
            <person name="Viehoever P."/>
            <person name="Arnold W."/>
            <person name="Bekel T."/>
            <person name="Blom J."/>
            <person name="Gartemann K.H."/>
            <person name="Linke B."/>
            <person name="Goesmann A."/>
            <person name="Puhler A."/>
            <person name="Shukla S.K."/>
            <person name="Tauch A."/>
        </authorList>
    </citation>
    <scope>NUCLEOTIDE SEQUENCE [LARGE SCALE GENOMIC DNA]</scope>
    <source>
        <strain>ATCC 700975 / DSM 44827 / CIP 107346 / CN-1</strain>
    </source>
</reference>
<proteinExistence type="inferred from homology"/>
<name>NTPP_CORA7</name>
<evidence type="ECO:0000255" key="1">
    <source>
        <dbReference type="HAMAP-Rule" id="MF_00528"/>
    </source>
</evidence>
<protein>
    <recommendedName>
        <fullName evidence="1">Nucleoside triphosphate pyrophosphatase</fullName>
        <ecNumber evidence="1">3.6.1.9</ecNumber>
    </recommendedName>
    <alternativeName>
        <fullName evidence="1">Nucleotide pyrophosphatase</fullName>
        <shortName evidence="1">Nucleotide PPase</shortName>
    </alternativeName>
</protein>
<comment type="function">
    <text evidence="1">Nucleoside triphosphate pyrophosphatase. May have a dual role in cell division arrest and in preventing the incorporation of modified nucleotides into cellular nucleic acids.</text>
</comment>
<comment type="catalytic activity">
    <reaction evidence="1">
        <text>a ribonucleoside 5'-triphosphate + H2O = a ribonucleoside 5'-phosphate + diphosphate + H(+)</text>
        <dbReference type="Rhea" id="RHEA:23996"/>
        <dbReference type="ChEBI" id="CHEBI:15377"/>
        <dbReference type="ChEBI" id="CHEBI:15378"/>
        <dbReference type="ChEBI" id="CHEBI:33019"/>
        <dbReference type="ChEBI" id="CHEBI:58043"/>
        <dbReference type="ChEBI" id="CHEBI:61557"/>
        <dbReference type="EC" id="3.6.1.9"/>
    </reaction>
</comment>
<comment type="catalytic activity">
    <reaction evidence="1">
        <text>a 2'-deoxyribonucleoside 5'-triphosphate + H2O = a 2'-deoxyribonucleoside 5'-phosphate + diphosphate + H(+)</text>
        <dbReference type="Rhea" id="RHEA:44644"/>
        <dbReference type="ChEBI" id="CHEBI:15377"/>
        <dbReference type="ChEBI" id="CHEBI:15378"/>
        <dbReference type="ChEBI" id="CHEBI:33019"/>
        <dbReference type="ChEBI" id="CHEBI:61560"/>
        <dbReference type="ChEBI" id="CHEBI:65317"/>
        <dbReference type="EC" id="3.6.1.9"/>
    </reaction>
</comment>
<comment type="cofactor">
    <cofactor evidence="1">
        <name>a divalent metal cation</name>
        <dbReference type="ChEBI" id="CHEBI:60240"/>
    </cofactor>
</comment>
<comment type="subcellular location">
    <subcellularLocation>
        <location evidence="1">Cytoplasm</location>
    </subcellularLocation>
</comment>
<comment type="similarity">
    <text evidence="1">Belongs to the Maf family.</text>
</comment>
<accession>C3PEA3</accession>
<dbReference type="EC" id="3.6.1.9" evidence="1"/>
<dbReference type="EMBL" id="CP001601">
    <property type="protein sequence ID" value="ACP32157.1"/>
    <property type="molecule type" value="Genomic_DNA"/>
</dbReference>
<dbReference type="RefSeq" id="WP_010189354.1">
    <property type="nucleotide sequence ID" value="NC_012590.1"/>
</dbReference>
<dbReference type="SMR" id="C3PEA3"/>
<dbReference type="STRING" id="548476.cauri_0560"/>
<dbReference type="GeneID" id="31923180"/>
<dbReference type="KEGG" id="car:cauri_0560"/>
<dbReference type="eggNOG" id="COG0424">
    <property type="taxonomic scope" value="Bacteria"/>
</dbReference>
<dbReference type="HOGENOM" id="CLU_040416_1_2_11"/>
<dbReference type="OrthoDB" id="3527985at2"/>
<dbReference type="Proteomes" id="UP000002077">
    <property type="component" value="Chromosome"/>
</dbReference>
<dbReference type="GO" id="GO:0005737">
    <property type="term" value="C:cytoplasm"/>
    <property type="evidence" value="ECO:0007669"/>
    <property type="project" value="UniProtKB-SubCell"/>
</dbReference>
<dbReference type="GO" id="GO:0047429">
    <property type="term" value="F:nucleoside triphosphate diphosphatase activity"/>
    <property type="evidence" value="ECO:0007669"/>
    <property type="project" value="UniProtKB-EC"/>
</dbReference>
<dbReference type="GO" id="GO:0009117">
    <property type="term" value="P:nucleotide metabolic process"/>
    <property type="evidence" value="ECO:0007669"/>
    <property type="project" value="UniProtKB-KW"/>
</dbReference>
<dbReference type="CDD" id="cd00555">
    <property type="entry name" value="Maf"/>
    <property type="match status" value="1"/>
</dbReference>
<dbReference type="Gene3D" id="3.90.950.10">
    <property type="match status" value="1"/>
</dbReference>
<dbReference type="HAMAP" id="MF_00528">
    <property type="entry name" value="Maf"/>
    <property type="match status" value="1"/>
</dbReference>
<dbReference type="InterPro" id="IPR029001">
    <property type="entry name" value="ITPase-like_fam"/>
</dbReference>
<dbReference type="InterPro" id="IPR003697">
    <property type="entry name" value="Maf-like"/>
</dbReference>
<dbReference type="NCBIfam" id="TIGR00172">
    <property type="entry name" value="maf"/>
    <property type="match status" value="1"/>
</dbReference>
<dbReference type="PANTHER" id="PTHR43213">
    <property type="entry name" value="BIFUNCTIONAL DTTP/UTP PYROPHOSPHATASE/METHYLTRANSFERASE PROTEIN-RELATED"/>
    <property type="match status" value="1"/>
</dbReference>
<dbReference type="PANTHER" id="PTHR43213:SF5">
    <property type="entry name" value="BIFUNCTIONAL DTTP_UTP PYROPHOSPHATASE_METHYLTRANSFERASE PROTEIN-RELATED"/>
    <property type="match status" value="1"/>
</dbReference>
<dbReference type="Pfam" id="PF02545">
    <property type="entry name" value="Maf"/>
    <property type="match status" value="1"/>
</dbReference>
<dbReference type="PIRSF" id="PIRSF006305">
    <property type="entry name" value="Maf"/>
    <property type="match status" value="1"/>
</dbReference>
<dbReference type="SUPFAM" id="SSF52972">
    <property type="entry name" value="ITPase-like"/>
    <property type="match status" value="1"/>
</dbReference>